<protein>
    <recommendedName>
        <fullName>Keratin, type II cytoskeletal 73</fullName>
    </recommendedName>
    <alternativeName>
        <fullName>Cytokeratin-73</fullName>
        <shortName>CK-73</shortName>
    </alternativeName>
    <alternativeName>
        <fullName>Keratin-73</fullName>
        <shortName>K73</shortName>
    </alternativeName>
    <alternativeName>
        <fullName>Type II inner root sheath-specific keratin-K6irs3</fullName>
    </alternativeName>
    <alternativeName>
        <fullName>Type-II keratin Kb36</fullName>
    </alternativeName>
</protein>
<accession>Q6IG03</accession>
<dbReference type="EMBL" id="AABR03055962">
    <property type="status" value="NOT_ANNOTATED_CDS"/>
    <property type="molecule type" value="Genomic_DNA"/>
</dbReference>
<dbReference type="EMBL" id="BK003982">
    <property type="protein sequence ID" value="DAA02227.1"/>
    <property type="status" value="ALT_SEQ"/>
    <property type="molecule type" value="mRNA"/>
</dbReference>
<dbReference type="RefSeq" id="NP_001008808.1">
    <property type="nucleotide sequence ID" value="NM_001008808.1"/>
</dbReference>
<dbReference type="SMR" id="Q6IG03"/>
<dbReference type="FunCoup" id="Q6IG03">
    <property type="interactions" value="29"/>
</dbReference>
<dbReference type="STRING" id="10116.ENSRNOP00000013122"/>
<dbReference type="iPTMnet" id="Q6IG03"/>
<dbReference type="PhosphoSitePlus" id="Q6IG03"/>
<dbReference type="jPOST" id="Q6IG03"/>
<dbReference type="PaxDb" id="10116-ENSRNOP00000013122"/>
<dbReference type="GeneID" id="300248"/>
<dbReference type="KEGG" id="rno:300248"/>
<dbReference type="UCSC" id="RGD:1359597">
    <property type="organism name" value="rat"/>
</dbReference>
<dbReference type="AGR" id="RGD:1359597"/>
<dbReference type="CTD" id="319101"/>
<dbReference type="RGD" id="1359597">
    <property type="gene designation" value="Krt73"/>
</dbReference>
<dbReference type="VEuPathDB" id="HostDB:ENSRNOG00000025087"/>
<dbReference type="eggNOG" id="ENOG502SK67">
    <property type="taxonomic scope" value="Eukaryota"/>
</dbReference>
<dbReference type="InParanoid" id="Q6IG03"/>
<dbReference type="PhylomeDB" id="Q6IG03"/>
<dbReference type="Reactome" id="R-RNO-6805567">
    <property type="pathway name" value="Keratinization"/>
</dbReference>
<dbReference type="Reactome" id="R-RNO-6809371">
    <property type="pathway name" value="Formation of the cornified envelope"/>
</dbReference>
<dbReference type="PRO" id="PR:Q6IG03"/>
<dbReference type="Proteomes" id="UP000002494">
    <property type="component" value="Chromosome 7"/>
</dbReference>
<dbReference type="ExpressionAtlas" id="Q6IG03">
    <property type="expression patterns" value="baseline and differential"/>
</dbReference>
<dbReference type="GO" id="GO:0045095">
    <property type="term" value="C:keratin filament"/>
    <property type="evidence" value="ECO:0000318"/>
    <property type="project" value="GO_Central"/>
</dbReference>
<dbReference type="GO" id="GO:0030280">
    <property type="term" value="F:structural constituent of skin epidermis"/>
    <property type="evidence" value="ECO:0000318"/>
    <property type="project" value="GO_Central"/>
</dbReference>
<dbReference type="GO" id="GO:0045109">
    <property type="term" value="P:intermediate filament organization"/>
    <property type="evidence" value="ECO:0000318"/>
    <property type="project" value="GO_Central"/>
</dbReference>
<dbReference type="GO" id="GO:0031424">
    <property type="term" value="P:keratinization"/>
    <property type="evidence" value="ECO:0000318"/>
    <property type="project" value="GO_Central"/>
</dbReference>
<dbReference type="FunFam" id="1.20.5.1160:FF:000001">
    <property type="entry name" value="Keratin type II"/>
    <property type="match status" value="1"/>
</dbReference>
<dbReference type="FunFam" id="1.20.5.170:FF:000004">
    <property type="entry name" value="Keratin, type II cytoskeletal 5"/>
    <property type="match status" value="1"/>
</dbReference>
<dbReference type="FunFam" id="1.20.5.500:FF:000001">
    <property type="entry name" value="Type II keratin 23"/>
    <property type="match status" value="1"/>
</dbReference>
<dbReference type="Gene3D" id="1.20.5.170">
    <property type="match status" value="1"/>
</dbReference>
<dbReference type="Gene3D" id="1.20.5.500">
    <property type="entry name" value="Single helix bin"/>
    <property type="match status" value="1"/>
</dbReference>
<dbReference type="Gene3D" id="1.20.5.1160">
    <property type="entry name" value="Vasodilator-stimulated phosphoprotein"/>
    <property type="match status" value="1"/>
</dbReference>
<dbReference type="InterPro" id="IPR018039">
    <property type="entry name" value="IF_conserved"/>
</dbReference>
<dbReference type="InterPro" id="IPR039008">
    <property type="entry name" value="IF_rod_dom"/>
</dbReference>
<dbReference type="InterPro" id="IPR032444">
    <property type="entry name" value="Keratin_2_head"/>
</dbReference>
<dbReference type="InterPro" id="IPR003054">
    <property type="entry name" value="Keratin_II"/>
</dbReference>
<dbReference type="PANTHER" id="PTHR45616">
    <property type="entry name" value="GATA-TYPE DOMAIN-CONTAINING PROTEIN"/>
    <property type="match status" value="1"/>
</dbReference>
<dbReference type="PANTHER" id="PTHR45616:SF31">
    <property type="entry name" value="KERATIN, TYPE II CYTOSKELETAL 73"/>
    <property type="match status" value="1"/>
</dbReference>
<dbReference type="Pfam" id="PF00038">
    <property type="entry name" value="Filament"/>
    <property type="match status" value="1"/>
</dbReference>
<dbReference type="Pfam" id="PF16208">
    <property type="entry name" value="Keratin_2_head"/>
    <property type="match status" value="1"/>
</dbReference>
<dbReference type="PRINTS" id="PR01276">
    <property type="entry name" value="TYPE2KERATIN"/>
</dbReference>
<dbReference type="SMART" id="SM01391">
    <property type="entry name" value="Filament"/>
    <property type="match status" value="1"/>
</dbReference>
<dbReference type="SUPFAM" id="SSF64593">
    <property type="entry name" value="Intermediate filament protein, coiled coil region"/>
    <property type="match status" value="3"/>
</dbReference>
<dbReference type="PROSITE" id="PS00226">
    <property type="entry name" value="IF_ROD_1"/>
    <property type="match status" value="1"/>
</dbReference>
<dbReference type="PROSITE" id="PS51842">
    <property type="entry name" value="IF_ROD_2"/>
    <property type="match status" value="1"/>
</dbReference>
<proteinExistence type="evidence at protein level"/>
<feature type="chain" id="PRO_0000314883" description="Keratin, type II cytoskeletal 73">
    <location>
        <begin position="1"/>
        <end position="553"/>
    </location>
</feature>
<feature type="domain" description="IF rod" evidence="2">
    <location>
        <begin position="131"/>
        <end position="444"/>
    </location>
</feature>
<feature type="region of interest" description="Head">
    <location>
        <begin position="1"/>
        <end position="130"/>
    </location>
</feature>
<feature type="region of interest" description="Coil 1A">
    <location>
        <begin position="131"/>
        <end position="166"/>
    </location>
</feature>
<feature type="region of interest" description="Linker 1">
    <location>
        <begin position="167"/>
        <end position="185"/>
    </location>
</feature>
<feature type="region of interest" description="Coil 1B">
    <location>
        <begin position="186"/>
        <end position="277"/>
    </location>
</feature>
<feature type="region of interest" description="Linker 12">
    <location>
        <begin position="278"/>
        <end position="301"/>
    </location>
</feature>
<feature type="region of interest" description="Coil 2">
    <location>
        <begin position="302"/>
        <end position="440"/>
    </location>
</feature>
<feature type="region of interest" description="Tail">
    <location>
        <begin position="441"/>
        <end position="539"/>
    </location>
</feature>
<feature type="site" description="Stutter">
    <location>
        <position position="382"/>
    </location>
</feature>
<keyword id="KW-0175">Coiled coil</keyword>
<keyword id="KW-0903">Direct protein sequencing</keyword>
<keyword id="KW-0403">Intermediate filament</keyword>
<keyword id="KW-0416">Keratin</keyword>
<keyword id="KW-1185">Reference proteome</keyword>
<evidence type="ECO:0000250" key="1"/>
<evidence type="ECO:0000255" key="2">
    <source>
        <dbReference type="PROSITE-ProRule" id="PRU01188"/>
    </source>
</evidence>
<evidence type="ECO:0000305" key="3"/>
<name>K2C73_RAT</name>
<comment type="function">
    <text evidence="1">Has a role in hair formation. Specific component of keratin intermediate filaments in the inner root sheath (IRS) of the hair follicle (By similarity).</text>
</comment>
<comment type="subunit">
    <text>Heterotetramer of two type I and two type II keratins.</text>
</comment>
<comment type="miscellaneous">
    <text>There are two types of cytoskeletal and microfibrillar keratin, I (acidic) and II (neutral to basic) (40-55 and 56-70 kDa, respectively).</text>
</comment>
<comment type="similarity">
    <text evidence="2">Belongs to the intermediate filament family.</text>
</comment>
<comment type="sequence caution" evidence="3">
    <conflict type="erroneous gene model prediction">
        <sequence resource="EMBL-CDS" id="DAA02227"/>
    </conflict>
</comment>
<sequence>MNRQFTCKSGAANRGFSGCSAVLSGGSASSYRAGGKGLGGGFSSRSLYSLRSPRSISFNVASGSGRTGGYGFGRNRASGFAGSMFGGGALGPSNPSLCLPGGIHQVTVNKSLLAPLNVELDPEIQKVRAQEREQIKALNNKFASFIDKVRFLEQQNQVLQTKWELLQQLDLSNCRRNLEPVYEAHISSLQKQLDSLSGDRVRLDSELRGMRDAVEDCKKRYEEEINKRTTAENEFVVLKKDVDAAYMSKVELQAKVDALDGEIKFLKCLYEGEITQMQSHISDTSVVLSMDNNRNLDLDSIIAEVRAQYEDIALKSKAEAEMVYQTKFQELQLAAGRHGDDLKHTRNEISELTRLIQRLRSEIESVKKQCSNLETAIADAEQRGDCALKDAQAKLDDLERALHQAKEELARMLREHQELMSMKLALDIEIATYRKLLEGEECRMSGEHTNAVSISVISSSTTGAVGAGTSFGFSNPSTYGYRPSSVAGGYGILSGGCVTGSGNCSPRGDTKTRLGSASEFKEVSGKTLALGSPSKKTMRADRQSSISVQLWFS</sequence>
<reference key="1">
    <citation type="journal article" date="2004" name="Nature">
        <title>Genome sequence of the Brown Norway rat yields insights into mammalian evolution.</title>
        <authorList>
            <person name="Gibbs R.A."/>
            <person name="Weinstock G.M."/>
            <person name="Metzker M.L."/>
            <person name="Muzny D.M."/>
            <person name="Sodergren E.J."/>
            <person name="Scherer S."/>
            <person name="Scott G."/>
            <person name="Steffen D."/>
            <person name="Worley K.C."/>
            <person name="Burch P.E."/>
            <person name="Okwuonu G."/>
            <person name="Hines S."/>
            <person name="Lewis L."/>
            <person name="Deramo C."/>
            <person name="Delgado O."/>
            <person name="Dugan-Rocha S."/>
            <person name="Miner G."/>
            <person name="Morgan M."/>
            <person name="Hawes A."/>
            <person name="Gill R."/>
            <person name="Holt R.A."/>
            <person name="Adams M.D."/>
            <person name="Amanatides P.G."/>
            <person name="Baden-Tillson H."/>
            <person name="Barnstead M."/>
            <person name="Chin S."/>
            <person name="Evans C.A."/>
            <person name="Ferriera S."/>
            <person name="Fosler C."/>
            <person name="Glodek A."/>
            <person name="Gu Z."/>
            <person name="Jennings D."/>
            <person name="Kraft C.L."/>
            <person name="Nguyen T."/>
            <person name="Pfannkoch C.M."/>
            <person name="Sitter C."/>
            <person name="Sutton G.G."/>
            <person name="Venter J.C."/>
            <person name="Woodage T."/>
            <person name="Smith D."/>
            <person name="Lee H.-M."/>
            <person name="Gustafson E."/>
            <person name="Cahill P."/>
            <person name="Kana A."/>
            <person name="Doucette-Stamm L."/>
            <person name="Weinstock K."/>
            <person name="Fechtel K."/>
            <person name="Weiss R.B."/>
            <person name="Dunn D.M."/>
            <person name="Green E.D."/>
            <person name="Blakesley R.W."/>
            <person name="Bouffard G.G."/>
            <person name="De Jong P.J."/>
            <person name="Osoegawa K."/>
            <person name="Zhu B."/>
            <person name="Marra M."/>
            <person name="Schein J."/>
            <person name="Bosdet I."/>
            <person name="Fjell C."/>
            <person name="Jones S."/>
            <person name="Krzywinski M."/>
            <person name="Mathewson C."/>
            <person name="Siddiqui A."/>
            <person name="Wye N."/>
            <person name="McPherson J."/>
            <person name="Zhao S."/>
            <person name="Fraser C.M."/>
            <person name="Shetty J."/>
            <person name="Shatsman S."/>
            <person name="Geer K."/>
            <person name="Chen Y."/>
            <person name="Abramzon S."/>
            <person name="Nierman W.C."/>
            <person name="Havlak P.H."/>
            <person name="Chen R."/>
            <person name="Durbin K.J."/>
            <person name="Egan A."/>
            <person name="Ren Y."/>
            <person name="Song X.-Z."/>
            <person name="Li B."/>
            <person name="Liu Y."/>
            <person name="Qin X."/>
            <person name="Cawley S."/>
            <person name="Cooney A.J."/>
            <person name="D'Souza L.M."/>
            <person name="Martin K."/>
            <person name="Wu J.Q."/>
            <person name="Gonzalez-Garay M.L."/>
            <person name="Jackson A.R."/>
            <person name="Kalafus K.J."/>
            <person name="McLeod M.P."/>
            <person name="Milosavljevic A."/>
            <person name="Virk D."/>
            <person name="Volkov A."/>
            <person name="Wheeler D.A."/>
            <person name="Zhang Z."/>
            <person name="Bailey J.A."/>
            <person name="Eichler E.E."/>
            <person name="Tuzun E."/>
            <person name="Birney E."/>
            <person name="Mongin E."/>
            <person name="Ureta-Vidal A."/>
            <person name="Woodwark C."/>
            <person name="Zdobnov E."/>
            <person name="Bork P."/>
            <person name="Suyama M."/>
            <person name="Torrents D."/>
            <person name="Alexandersson M."/>
            <person name="Trask B.J."/>
            <person name="Young J.M."/>
            <person name="Huang H."/>
            <person name="Wang H."/>
            <person name="Xing H."/>
            <person name="Daniels S."/>
            <person name="Gietzen D."/>
            <person name="Schmidt J."/>
            <person name="Stevens K."/>
            <person name="Vitt U."/>
            <person name="Wingrove J."/>
            <person name="Camara F."/>
            <person name="Mar Alba M."/>
            <person name="Abril J.F."/>
            <person name="Guigo R."/>
            <person name="Smit A."/>
            <person name="Dubchak I."/>
            <person name="Rubin E.M."/>
            <person name="Couronne O."/>
            <person name="Poliakov A."/>
            <person name="Huebner N."/>
            <person name="Ganten D."/>
            <person name="Goesele C."/>
            <person name="Hummel O."/>
            <person name="Kreitler T."/>
            <person name="Lee Y.-A."/>
            <person name="Monti J."/>
            <person name="Schulz H."/>
            <person name="Zimdahl H."/>
            <person name="Himmelbauer H."/>
            <person name="Lehrach H."/>
            <person name="Jacob H.J."/>
            <person name="Bromberg S."/>
            <person name="Gullings-Handley J."/>
            <person name="Jensen-Seaman M.I."/>
            <person name="Kwitek A.E."/>
            <person name="Lazar J."/>
            <person name="Pasko D."/>
            <person name="Tonellato P.J."/>
            <person name="Twigger S."/>
            <person name="Ponting C.P."/>
            <person name="Duarte J.M."/>
            <person name="Rice S."/>
            <person name="Goodstadt L."/>
            <person name="Beatson S.A."/>
            <person name="Emes R.D."/>
            <person name="Winter E.E."/>
            <person name="Webber C."/>
            <person name="Brandt P."/>
            <person name="Nyakatura G."/>
            <person name="Adetobi M."/>
            <person name="Chiaromonte F."/>
            <person name="Elnitski L."/>
            <person name="Eswara P."/>
            <person name="Hardison R.C."/>
            <person name="Hou M."/>
            <person name="Kolbe D."/>
            <person name="Makova K."/>
            <person name="Miller W."/>
            <person name="Nekrutenko A."/>
            <person name="Riemer C."/>
            <person name="Schwartz S."/>
            <person name="Taylor J."/>
            <person name="Yang S."/>
            <person name="Zhang Y."/>
            <person name="Lindpaintner K."/>
            <person name="Andrews T.D."/>
            <person name="Caccamo M."/>
            <person name="Clamp M."/>
            <person name="Clarke L."/>
            <person name="Curwen V."/>
            <person name="Durbin R.M."/>
            <person name="Eyras E."/>
            <person name="Searle S.M."/>
            <person name="Cooper G.M."/>
            <person name="Batzoglou S."/>
            <person name="Brudno M."/>
            <person name="Sidow A."/>
            <person name="Stone E.A."/>
            <person name="Payseur B.A."/>
            <person name="Bourque G."/>
            <person name="Lopez-Otin C."/>
            <person name="Puente X.S."/>
            <person name="Chakrabarti K."/>
            <person name="Chatterji S."/>
            <person name="Dewey C."/>
            <person name="Pachter L."/>
            <person name="Bray N."/>
            <person name="Yap V.B."/>
            <person name="Caspi A."/>
            <person name="Tesler G."/>
            <person name="Pevzner P.A."/>
            <person name="Haussler D."/>
            <person name="Roskin K.M."/>
            <person name="Baertsch R."/>
            <person name="Clawson H."/>
            <person name="Furey T.S."/>
            <person name="Hinrichs A.S."/>
            <person name="Karolchik D."/>
            <person name="Kent W.J."/>
            <person name="Rosenbloom K.R."/>
            <person name="Trumbower H."/>
            <person name="Weirauch M."/>
            <person name="Cooper D.N."/>
            <person name="Stenson P.D."/>
            <person name="Ma B."/>
            <person name="Brent M."/>
            <person name="Arumugam M."/>
            <person name="Shteynberg D."/>
            <person name="Copley R.R."/>
            <person name="Taylor M.S."/>
            <person name="Riethman H."/>
            <person name="Mudunuri U."/>
            <person name="Peterson J."/>
            <person name="Guyer M."/>
            <person name="Felsenfeld A."/>
            <person name="Old S."/>
            <person name="Mockrin S."/>
            <person name="Collins F.S."/>
        </authorList>
    </citation>
    <scope>NUCLEOTIDE SEQUENCE [LARGE SCALE GENOMIC DNA]</scope>
    <source>
        <strain>Brown Norway</strain>
    </source>
</reference>
<reference key="2">
    <citation type="submission" date="2009-01" db="UniProtKB">
        <authorList>
            <person name="Lubec G."/>
            <person name="Chen W.-Q."/>
        </authorList>
    </citation>
    <scope>PROTEIN SEQUENCE OF 151-162</scope>
    <scope>IDENTIFICATION BY MASS SPECTROMETRY</scope>
    <source>
        <strain>Sprague-Dawley</strain>
        <tissue>Hippocampus</tissue>
    </source>
</reference>
<reference key="3">
    <citation type="journal article" date="2004" name="Eur. J. Cell Biol.">
        <title>Comprehensive analysis of keratin gene clusters in humans and rodents.</title>
        <authorList>
            <person name="Hesse M."/>
            <person name="Zimek A."/>
            <person name="Weber K."/>
            <person name="Magin T.M."/>
        </authorList>
    </citation>
    <scope>IDENTIFICATION</scope>
</reference>
<gene>
    <name type="primary">Krt73</name>
    <name type="synonym">Kb36</name>
</gene>
<organism>
    <name type="scientific">Rattus norvegicus</name>
    <name type="common">Rat</name>
    <dbReference type="NCBI Taxonomy" id="10116"/>
    <lineage>
        <taxon>Eukaryota</taxon>
        <taxon>Metazoa</taxon>
        <taxon>Chordata</taxon>
        <taxon>Craniata</taxon>
        <taxon>Vertebrata</taxon>
        <taxon>Euteleostomi</taxon>
        <taxon>Mammalia</taxon>
        <taxon>Eutheria</taxon>
        <taxon>Euarchontoglires</taxon>
        <taxon>Glires</taxon>
        <taxon>Rodentia</taxon>
        <taxon>Myomorpha</taxon>
        <taxon>Muroidea</taxon>
        <taxon>Muridae</taxon>
        <taxon>Murinae</taxon>
        <taxon>Rattus</taxon>
    </lineage>
</organism>